<feature type="chain" id="PRO_0000347291" description="Unknown protein 4">
    <location>
        <begin position="1" status="less than"/>
        <end position="12" status="greater than"/>
    </location>
</feature>
<feature type="non-terminal residue" evidence="1">
    <location>
        <position position="1"/>
    </location>
</feature>
<feature type="non-terminal residue" evidence="1">
    <location>
        <position position="12"/>
    </location>
</feature>
<protein>
    <recommendedName>
        <fullName>Unknown protein 4</fullName>
    </recommendedName>
</protein>
<reference key="1">
    <citation type="journal article" date="2008" name="J. Proteomics">
        <title>A proteomics approach to identify proteins differentially expressed in Douglas-fir seedlings infected by Phellinus sulphurascens.</title>
        <authorList>
            <person name="Islam M.A."/>
            <person name="Sturrock R.N."/>
            <person name="Ekramoddoullah A.K.M."/>
        </authorList>
    </citation>
    <scope>IDENTIFICATION BY MASS SPECTROMETRY</scope>
</reference>
<accession>P85960</accession>
<sequence length="12" mass="1284">ENGQLDGVIDPK</sequence>
<proteinExistence type="evidence at protein level"/>
<name>UP04_PSEMZ</name>
<organism>
    <name type="scientific">Pseudotsuga menziesii</name>
    <name type="common">Douglas-fir</name>
    <name type="synonym">Abies menziesii</name>
    <dbReference type="NCBI Taxonomy" id="3357"/>
    <lineage>
        <taxon>Eukaryota</taxon>
        <taxon>Viridiplantae</taxon>
        <taxon>Streptophyta</taxon>
        <taxon>Embryophyta</taxon>
        <taxon>Tracheophyta</taxon>
        <taxon>Spermatophyta</taxon>
        <taxon>Pinopsida</taxon>
        <taxon>Pinidae</taxon>
        <taxon>Conifers I</taxon>
        <taxon>Pinales</taxon>
        <taxon>Pinaceae</taxon>
        <taxon>Pseudotsuga</taxon>
    </lineage>
</organism>
<evidence type="ECO:0000303" key="1">
    <source>
    </source>
</evidence>